<name>CYAY_HAEIE</name>
<accession>A5UDZ6</accession>
<feature type="chain" id="PRO_1000010931" description="Iron-sulfur cluster assembly protein CyaY">
    <location>
        <begin position="1"/>
        <end position="101"/>
    </location>
</feature>
<proteinExistence type="inferred from homology"/>
<comment type="function">
    <text evidence="1">Involved in iron-sulfur (Fe-S) cluster assembly. May act as a regulator of Fe-S biogenesis.</text>
</comment>
<comment type="similarity">
    <text evidence="1">Belongs to the frataxin family.</text>
</comment>
<sequence length="101" mass="11676">MNIAEFHQNIEHVWQKIEEELENQGADVDCETQGSVFTITFDNRTQIVINKQEPLLELWIASKLGGFHFAFKNGEWVSNDGQRFWDCFVEACAAHGENVQF</sequence>
<dbReference type="EMBL" id="CP000671">
    <property type="protein sequence ID" value="ABQ98997.1"/>
    <property type="molecule type" value="Genomic_DNA"/>
</dbReference>
<dbReference type="SMR" id="A5UDZ6"/>
<dbReference type="KEGG" id="hip:CGSHiEE_08480"/>
<dbReference type="HOGENOM" id="CLU_080880_3_0_6"/>
<dbReference type="GO" id="GO:0005829">
    <property type="term" value="C:cytosol"/>
    <property type="evidence" value="ECO:0007669"/>
    <property type="project" value="TreeGrafter"/>
</dbReference>
<dbReference type="GO" id="GO:0008199">
    <property type="term" value="F:ferric iron binding"/>
    <property type="evidence" value="ECO:0007669"/>
    <property type="project" value="InterPro"/>
</dbReference>
<dbReference type="GO" id="GO:0008198">
    <property type="term" value="F:ferrous iron binding"/>
    <property type="evidence" value="ECO:0007669"/>
    <property type="project" value="TreeGrafter"/>
</dbReference>
<dbReference type="GO" id="GO:0016226">
    <property type="term" value="P:iron-sulfur cluster assembly"/>
    <property type="evidence" value="ECO:0007669"/>
    <property type="project" value="UniProtKB-UniRule"/>
</dbReference>
<dbReference type="CDD" id="cd00503">
    <property type="entry name" value="Frataxin"/>
    <property type="match status" value="1"/>
</dbReference>
<dbReference type="FunFam" id="3.30.920.10:FF:000009">
    <property type="entry name" value="Iron-sulfur cluster assembly protein CyaY"/>
    <property type="match status" value="1"/>
</dbReference>
<dbReference type="Gene3D" id="3.30.920.10">
    <property type="entry name" value="Frataxin/CyaY"/>
    <property type="match status" value="1"/>
</dbReference>
<dbReference type="HAMAP" id="MF_00142">
    <property type="entry name" value="CyaY"/>
    <property type="match status" value="1"/>
</dbReference>
<dbReference type="InterPro" id="IPR047584">
    <property type="entry name" value="CyaY"/>
</dbReference>
<dbReference type="InterPro" id="IPR002908">
    <property type="entry name" value="Frataxin/CyaY"/>
</dbReference>
<dbReference type="InterPro" id="IPR036524">
    <property type="entry name" value="Frataxin/CyaY_sf"/>
</dbReference>
<dbReference type="InterPro" id="IPR020895">
    <property type="entry name" value="Frataxin_CS"/>
</dbReference>
<dbReference type="NCBIfam" id="TIGR03421">
    <property type="entry name" value="FeS_CyaY"/>
    <property type="match status" value="1"/>
</dbReference>
<dbReference type="PANTHER" id="PTHR16821">
    <property type="entry name" value="FRATAXIN"/>
    <property type="match status" value="1"/>
</dbReference>
<dbReference type="PANTHER" id="PTHR16821:SF2">
    <property type="entry name" value="FRATAXIN, MITOCHONDRIAL"/>
    <property type="match status" value="1"/>
</dbReference>
<dbReference type="Pfam" id="PF01491">
    <property type="entry name" value="Frataxin_Cyay"/>
    <property type="match status" value="1"/>
</dbReference>
<dbReference type="SMART" id="SM01219">
    <property type="entry name" value="Frataxin_Cyay"/>
    <property type="match status" value="1"/>
</dbReference>
<dbReference type="SUPFAM" id="SSF55387">
    <property type="entry name" value="Frataxin/Nqo15-like"/>
    <property type="match status" value="1"/>
</dbReference>
<dbReference type="PROSITE" id="PS01344">
    <property type="entry name" value="FRATAXIN_1"/>
    <property type="match status" value="1"/>
</dbReference>
<dbReference type="PROSITE" id="PS50810">
    <property type="entry name" value="FRATAXIN_2"/>
    <property type="match status" value="1"/>
</dbReference>
<keyword id="KW-0408">Iron</keyword>
<keyword id="KW-0479">Metal-binding</keyword>
<reference key="1">
    <citation type="journal article" date="2007" name="Genome Biol.">
        <title>Characterization and modeling of the Haemophilus influenzae core and supragenomes based on the complete genomic sequences of Rd and 12 clinical nontypeable strains.</title>
        <authorList>
            <person name="Hogg J.S."/>
            <person name="Hu F.Z."/>
            <person name="Janto B."/>
            <person name="Boissy R."/>
            <person name="Hayes J."/>
            <person name="Keefe R."/>
            <person name="Post J.C."/>
            <person name="Ehrlich G.D."/>
        </authorList>
    </citation>
    <scope>NUCLEOTIDE SEQUENCE [LARGE SCALE GENOMIC DNA]</scope>
    <source>
        <strain>PittEE</strain>
    </source>
</reference>
<gene>
    <name evidence="1" type="primary">cyaY</name>
    <name type="ordered locus">CGSHiEE_08480</name>
</gene>
<organism>
    <name type="scientific">Haemophilus influenzae (strain PittEE)</name>
    <dbReference type="NCBI Taxonomy" id="374930"/>
    <lineage>
        <taxon>Bacteria</taxon>
        <taxon>Pseudomonadati</taxon>
        <taxon>Pseudomonadota</taxon>
        <taxon>Gammaproteobacteria</taxon>
        <taxon>Pasteurellales</taxon>
        <taxon>Pasteurellaceae</taxon>
        <taxon>Haemophilus</taxon>
    </lineage>
</organism>
<evidence type="ECO:0000255" key="1">
    <source>
        <dbReference type="HAMAP-Rule" id="MF_00142"/>
    </source>
</evidence>
<protein>
    <recommendedName>
        <fullName evidence="1">Iron-sulfur cluster assembly protein CyaY</fullName>
    </recommendedName>
</protein>